<accession>Q2LQD0</accession>
<keyword id="KW-1185">Reference proteome</keyword>
<keyword id="KW-0687">Ribonucleoprotein</keyword>
<keyword id="KW-0689">Ribosomal protein</keyword>
<keyword id="KW-0694">RNA-binding</keyword>
<keyword id="KW-0699">rRNA-binding</keyword>
<proteinExistence type="inferred from homology"/>
<sequence length="209" mass="24705">MARYKESACRLCRREGLKLFLKGDRCYGEKCAFERRGYAPGEHGQLRRKQPSDYGVQLREKQKLKRMYGLLEKQFRGYFEKADKKKGITGTNLLLYLERRLDNMVYRLGFANSRNEARQLVRHNHFLVNGRKVNIPSFLVNIGDFIEVTEEGRKNNKIIEAMETIVRRGIPQWLELEQENFKGKVKMLPTREELTMPIQEQLVVELYSK</sequence>
<organism>
    <name type="scientific">Syntrophus aciditrophicus (strain SB)</name>
    <dbReference type="NCBI Taxonomy" id="56780"/>
    <lineage>
        <taxon>Bacteria</taxon>
        <taxon>Pseudomonadati</taxon>
        <taxon>Thermodesulfobacteriota</taxon>
        <taxon>Syntrophia</taxon>
        <taxon>Syntrophales</taxon>
        <taxon>Syntrophaceae</taxon>
        <taxon>Syntrophus</taxon>
    </lineage>
</organism>
<comment type="function">
    <text evidence="1">One of the primary rRNA binding proteins, it binds directly to 16S rRNA where it nucleates assembly of the body of the 30S subunit.</text>
</comment>
<comment type="function">
    <text evidence="1">With S5 and S12 plays an important role in translational accuracy.</text>
</comment>
<comment type="subunit">
    <text evidence="1">Part of the 30S ribosomal subunit. Contacts protein S5. The interaction surface between S4 and S5 is involved in control of translational fidelity.</text>
</comment>
<comment type="similarity">
    <text evidence="1">Belongs to the universal ribosomal protein uS4 family.</text>
</comment>
<gene>
    <name evidence="1" type="primary">rpsD</name>
    <name type="ordered locus">SYNAS_03270</name>
    <name type="ORF">SYN_01600</name>
</gene>
<name>RS4_SYNAS</name>
<dbReference type="EMBL" id="CP000252">
    <property type="protein sequence ID" value="ABC76206.1"/>
    <property type="molecule type" value="Genomic_DNA"/>
</dbReference>
<dbReference type="RefSeq" id="WP_011416240.1">
    <property type="nucleotide sequence ID" value="NC_007759.1"/>
</dbReference>
<dbReference type="SMR" id="Q2LQD0"/>
<dbReference type="FunCoup" id="Q2LQD0">
    <property type="interactions" value="609"/>
</dbReference>
<dbReference type="STRING" id="56780.SYN_01600"/>
<dbReference type="KEGG" id="sat:SYN_01600"/>
<dbReference type="eggNOG" id="COG0522">
    <property type="taxonomic scope" value="Bacteria"/>
</dbReference>
<dbReference type="HOGENOM" id="CLU_092403_0_2_7"/>
<dbReference type="InParanoid" id="Q2LQD0"/>
<dbReference type="OrthoDB" id="9803672at2"/>
<dbReference type="Proteomes" id="UP000001933">
    <property type="component" value="Chromosome"/>
</dbReference>
<dbReference type="GO" id="GO:0015935">
    <property type="term" value="C:small ribosomal subunit"/>
    <property type="evidence" value="ECO:0007669"/>
    <property type="project" value="InterPro"/>
</dbReference>
<dbReference type="GO" id="GO:0019843">
    <property type="term" value="F:rRNA binding"/>
    <property type="evidence" value="ECO:0007669"/>
    <property type="project" value="UniProtKB-UniRule"/>
</dbReference>
<dbReference type="GO" id="GO:0003735">
    <property type="term" value="F:structural constituent of ribosome"/>
    <property type="evidence" value="ECO:0007669"/>
    <property type="project" value="InterPro"/>
</dbReference>
<dbReference type="GO" id="GO:0042274">
    <property type="term" value="P:ribosomal small subunit biogenesis"/>
    <property type="evidence" value="ECO:0007669"/>
    <property type="project" value="TreeGrafter"/>
</dbReference>
<dbReference type="GO" id="GO:0006412">
    <property type="term" value="P:translation"/>
    <property type="evidence" value="ECO:0007669"/>
    <property type="project" value="UniProtKB-UniRule"/>
</dbReference>
<dbReference type="CDD" id="cd00165">
    <property type="entry name" value="S4"/>
    <property type="match status" value="1"/>
</dbReference>
<dbReference type="FunFam" id="1.10.1050.10:FF:000001">
    <property type="entry name" value="30S ribosomal protein S4"/>
    <property type="match status" value="1"/>
</dbReference>
<dbReference type="FunFam" id="3.10.290.10:FF:000001">
    <property type="entry name" value="30S ribosomal protein S4"/>
    <property type="match status" value="1"/>
</dbReference>
<dbReference type="Gene3D" id="1.10.1050.10">
    <property type="entry name" value="Ribosomal Protein S4 Delta 41, Chain A, domain 1"/>
    <property type="match status" value="1"/>
</dbReference>
<dbReference type="Gene3D" id="3.10.290.10">
    <property type="entry name" value="RNA-binding S4 domain"/>
    <property type="match status" value="1"/>
</dbReference>
<dbReference type="HAMAP" id="MF_01306_B">
    <property type="entry name" value="Ribosomal_uS4_B"/>
    <property type="match status" value="1"/>
</dbReference>
<dbReference type="InterPro" id="IPR022801">
    <property type="entry name" value="Ribosomal_uS4"/>
</dbReference>
<dbReference type="InterPro" id="IPR005709">
    <property type="entry name" value="Ribosomal_uS4_bac-type"/>
</dbReference>
<dbReference type="InterPro" id="IPR018079">
    <property type="entry name" value="Ribosomal_uS4_CS"/>
</dbReference>
<dbReference type="InterPro" id="IPR001912">
    <property type="entry name" value="Ribosomal_uS4_N"/>
</dbReference>
<dbReference type="InterPro" id="IPR002942">
    <property type="entry name" value="S4_RNA-bd"/>
</dbReference>
<dbReference type="InterPro" id="IPR036986">
    <property type="entry name" value="S4_RNA-bd_sf"/>
</dbReference>
<dbReference type="NCBIfam" id="NF003717">
    <property type="entry name" value="PRK05327.1"/>
    <property type="match status" value="1"/>
</dbReference>
<dbReference type="NCBIfam" id="TIGR01017">
    <property type="entry name" value="rpsD_bact"/>
    <property type="match status" value="1"/>
</dbReference>
<dbReference type="PANTHER" id="PTHR11831">
    <property type="entry name" value="30S 40S RIBOSOMAL PROTEIN"/>
    <property type="match status" value="1"/>
</dbReference>
<dbReference type="PANTHER" id="PTHR11831:SF4">
    <property type="entry name" value="SMALL RIBOSOMAL SUBUNIT PROTEIN US4M"/>
    <property type="match status" value="1"/>
</dbReference>
<dbReference type="Pfam" id="PF00163">
    <property type="entry name" value="Ribosomal_S4"/>
    <property type="match status" value="1"/>
</dbReference>
<dbReference type="Pfam" id="PF01479">
    <property type="entry name" value="S4"/>
    <property type="match status" value="1"/>
</dbReference>
<dbReference type="SMART" id="SM01390">
    <property type="entry name" value="Ribosomal_S4"/>
    <property type="match status" value="1"/>
</dbReference>
<dbReference type="SMART" id="SM00363">
    <property type="entry name" value="S4"/>
    <property type="match status" value="1"/>
</dbReference>
<dbReference type="SUPFAM" id="SSF55174">
    <property type="entry name" value="Alpha-L RNA-binding motif"/>
    <property type="match status" value="1"/>
</dbReference>
<dbReference type="PROSITE" id="PS00632">
    <property type="entry name" value="RIBOSOMAL_S4"/>
    <property type="match status" value="1"/>
</dbReference>
<dbReference type="PROSITE" id="PS50889">
    <property type="entry name" value="S4"/>
    <property type="match status" value="1"/>
</dbReference>
<evidence type="ECO:0000255" key="1">
    <source>
        <dbReference type="HAMAP-Rule" id="MF_01306"/>
    </source>
</evidence>
<evidence type="ECO:0000305" key="2"/>
<reference key="1">
    <citation type="journal article" date="2007" name="Proc. Natl. Acad. Sci. U.S.A.">
        <title>The genome of Syntrophus aciditrophicus: life at the thermodynamic limit of microbial growth.</title>
        <authorList>
            <person name="McInerney M.J."/>
            <person name="Rohlin L."/>
            <person name="Mouttaki H."/>
            <person name="Kim U."/>
            <person name="Krupp R.S."/>
            <person name="Rios-Hernandez L."/>
            <person name="Sieber J."/>
            <person name="Struchtemeyer C.G."/>
            <person name="Bhattacharyya A."/>
            <person name="Campbell J.W."/>
            <person name="Gunsalus R.P."/>
        </authorList>
    </citation>
    <scope>NUCLEOTIDE SEQUENCE [LARGE SCALE GENOMIC DNA]</scope>
    <source>
        <strain>SB</strain>
    </source>
</reference>
<protein>
    <recommendedName>
        <fullName evidence="1">Small ribosomal subunit protein uS4</fullName>
    </recommendedName>
    <alternativeName>
        <fullName evidence="2">30S ribosomal protein S4</fullName>
    </alternativeName>
</protein>
<feature type="chain" id="PRO_0000293392" description="Small ribosomal subunit protein uS4">
    <location>
        <begin position="1"/>
        <end position="209"/>
    </location>
</feature>
<feature type="domain" description="S4 RNA-binding" evidence="1">
    <location>
        <begin position="99"/>
        <end position="162"/>
    </location>
</feature>